<organism>
    <name type="scientific">Guttera pucherani</name>
    <name type="common">Eastern crested guineafowl</name>
    <name type="synonym">Numida pucherani</name>
    <dbReference type="NCBI Taxonomy" id="8994"/>
    <lineage>
        <taxon>Eukaryota</taxon>
        <taxon>Metazoa</taxon>
        <taxon>Chordata</taxon>
        <taxon>Craniata</taxon>
        <taxon>Vertebrata</taxon>
        <taxon>Euteleostomi</taxon>
        <taxon>Archelosauria</taxon>
        <taxon>Archosauria</taxon>
        <taxon>Dinosauria</taxon>
        <taxon>Saurischia</taxon>
        <taxon>Theropoda</taxon>
        <taxon>Coelurosauria</taxon>
        <taxon>Aves</taxon>
        <taxon>Neognathae</taxon>
        <taxon>Galloanserae</taxon>
        <taxon>Galliformes</taxon>
        <taxon>Numididae</taxon>
        <taxon>Guttera</taxon>
    </lineage>
</organism>
<accession>P52260</accession>
<proteinExistence type="evidence at protein level"/>
<keyword id="KW-0903">Direct protein sequencing</keyword>
<keyword id="KW-1015">Disulfide bond</keyword>
<keyword id="KW-0325">Glycoprotein</keyword>
<keyword id="KW-0646">Protease inhibitor</keyword>
<keyword id="KW-0677">Repeat</keyword>
<keyword id="KW-0964">Secreted</keyword>
<keyword id="KW-0722">Serine protease inhibitor</keyword>
<feature type="chain" id="PRO_0000073122" description="Ovomucoid">
    <location>
        <begin position="1" status="less than"/>
        <end position="54" status="greater than"/>
    </location>
</feature>
<feature type="domain" description="Kazal-like" evidence="1">
    <location>
        <begin position="4"/>
        <end position="54"/>
    </location>
</feature>
<feature type="site" description="Reactive bond 3">
    <location>
        <begin position="16"/>
        <end position="17"/>
    </location>
</feature>
<feature type="glycosylation site" description="N-linked (GlcNAc...) asparagine">
    <location>
        <position position="43"/>
    </location>
</feature>
<feature type="disulfide bond">
    <location>
        <begin position="6"/>
        <end position="36"/>
    </location>
</feature>
<feature type="disulfide bond">
    <location>
        <begin position="14"/>
        <end position="33"/>
    </location>
</feature>
<feature type="disulfide bond">
    <location>
        <begin position="22"/>
        <end position="54"/>
    </location>
</feature>
<feature type="non-terminal residue">
    <location>
        <position position="1"/>
    </location>
</feature>
<feature type="non-terminal residue">
    <location>
        <position position="54"/>
    </location>
</feature>
<name>IOVO_GUTPU</name>
<reference key="1">
    <citation type="journal article" date="1990" name="J. Protein Chem.">
        <title>Amino acid sequences of ovomucoid third domain from 25 additional species of birds.</title>
        <authorList>
            <person name="Laskowski M. Jr."/>
            <person name="Apostol I."/>
            <person name="Ardelt W."/>
            <person name="Cook J."/>
            <person name="Giletto A."/>
            <person name="Kelly C.A."/>
            <person name="Lu W."/>
            <person name="Park S.J."/>
            <person name="Qasim M.A."/>
            <person name="Whatley H.E."/>
            <person name="Wieczorek A."/>
            <person name="Wynn R."/>
        </authorList>
    </citation>
    <scope>PROTEIN SEQUENCE</scope>
</reference>
<comment type="subcellular location">
    <subcellularLocation>
        <location>Secreted</location>
    </subcellularLocation>
</comment>
<comment type="domain">
    <text>Avian ovomucoid consists of three homologous, tandem Kazal family inhibitory domains.</text>
</comment>
<dbReference type="PIR" id="C61494">
    <property type="entry name" value="C61494"/>
</dbReference>
<dbReference type="SMR" id="P52260"/>
<dbReference type="GO" id="GO:0005576">
    <property type="term" value="C:extracellular region"/>
    <property type="evidence" value="ECO:0007669"/>
    <property type="project" value="UniProtKB-SubCell"/>
</dbReference>
<dbReference type="GO" id="GO:0004867">
    <property type="term" value="F:serine-type endopeptidase inhibitor activity"/>
    <property type="evidence" value="ECO:0007669"/>
    <property type="project" value="UniProtKB-KW"/>
</dbReference>
<dbReference type="CDD" id="cd00104">
    <property type="entry name" value="KAZAL_FS"/>
    <property type="match status" value="1"/>
</dbReference>
<dbReference type="FunFam" id="3.30.60.30:FF:000037">
    <property type="entry name" value="Ovomucoid"/>
    <property type="match status" value="1"/>
</dbReference>
<dbReference type="Gene3D" id="3.30.60.30">
    <property type="match status" value="1"/>
</dbReference>
<dbReference type="InterPro" id="IPR051597">
    <property type="entry name" value="Bifunctional_prot_inhibitor"/>
</dbReference>
<dbReference type="InterPro" id="IPR002350">
    <property type="entry name" value="Kazal_dom"/>
</dbReference>
<dbReference type="InterPro" id="IPR036058">
    <property type="entry name" value="Kazal_dom_sf"/>
</dbReference>
<dbReference type="InterPro" id="IPR001239">
    <property type="entry name" value="Prot_inh_Kazal-m"/>
</dbReference>
<dbReference type="PANTHER" id="PTHR47729:SF1">
    <property type="entry name" value="OVOMUCOID-LIKE-RELATED"/>
    <property type="match status" value="1"/>
</dbReference>
<dbReference type="PANTHER" id="PTHR47729">
    <property type="entry name" value="SERINE PEPTIDASE INHIBITOR, KAZAL TYPE 2, TANDEM DUPLICATE 1-RELATED"/>
    <property type="match status" value="1"/>
</dbReference>
<dbReference type="Pfam" id="PF00050">
    <property type="entry name" value="Kazal_1"/>
    <property type="match status" value="1"/>
</dbReference>
<dbReference type="PRINTS" id="PR00290">
    <property type="entry name" value="KAZALINHBTR"/>
</dbReference>
<dbReference type="SMART" id="SM00280">
    <property type="entry name" value="KAZAL"/>
    <property type="match status" value="1"/>
</dbReference>
<dbReference type="SUPFAM" id="SSF100895">
    <property type="entry name" value="Kazal-type serine protease inhibitors"/>
    <property type="match status" value="1"/>
</dbReference>
<dbReference type="PROSITE" id="PS00282">
    <property type="entry name" value="KAZAL_1"/>
    <property type="match status" value="1"/>
</dbReference>
<dbReference type="PROSITE" id="PS51465">
    <property type="entry name" value="KAZAL_2"/>
    <property type="match status" value="1"/>
</dbReference>
<sequence>LAAVDCSEYPKPACTMEHRPLCGSDNQTYDNKCNFCNAVVESNGTLTLSHFGKC</sequence>
<evidence type="ECO:0000255" key="1">
    <source>
        <dbReference type="PROSITE-ProRule" id="PRU00798"/>
    </source>
</evidence>
<protein>
    <recommendedName>
        <fullName>Ovomucoid</fullName>
    </recommendedName>
</protein>